<accession>Q05E29</accession>
<comment type="similarity">
    <text evidence="1">Belongs to the PDCD5 family.</text>
</comment>
<dbReference type="EMBL" id="BA000002">
    <property type="protein sequence ID" value="BAF34772.1"/>
    <property type="molecule type" value="Genomic_DNA"/>
</dbReference>
<dbReference type="RefSeq" id="WP_010866166.1">
    <property type="nucleotide sequence ID" value="NC_000854.2"/>
</dbReference>
<dbReference type="SMR" id="Q05E29"/>
<dbReference type="STRING" id="272557.APE_1087b"/>
<dbReference type="EnsemblBacteria" id="BAF34772">
    <property type="protein sequence ID" value="BAF34772"/>
    <property type="gene ID" value="APE_1087b"/>
</dbReference>
<dbReference type="GeneID" id="1445557"/>
<dbReference type="KEGG" id="ape:APE_1087b"/>
<dbReference type="eggNOG" id="arCOG04179">
    <property type="taxonomic scope" value="Archaea"/>
</dbReference>
<dbReference type="Proteomes" id="UP000002518">
    <property type="component" value="Chromosome"/>
</dbReference>
<dbReference type="GO" id="GO:0005829">
    <property type="term" value="C:cytosol"/>
    <property type="evidence" value="ECO:0007669"/>
    <property type="project" value="TreeGrafter"/>
</dbReference>
<dbReference type="GO" id="GO:0003677">
    <property type="term" value="F:DNA binding"/>
    <property type="evidence" value="ECO:0007669"/>
    <property type="project" value="UniProtKB-UniRule"/>
</dbReference>
<dbReference type="Gene3D" id="1.10.8.140">
    <property type="entry name" value="PDCD5-like"/>
    <property type="match status" value="1"/>
</dbReference>
<dbReference type="HAMAP" id="MF_00026">
    <property type="entry name" value="dsDNA_bind"/>
    <property type="match status" value="1"/>
</dbReference>
<dbReference type="InterPro" id="IPR022889">
    <property type="entry name" value="DNA_bind_arc"/>
</dbReference>
<dbReference type="InterPro" id="IPR002836">
    <property type="entry name" value="PDCD5-like"/>
</dbReference>
<dbReference type="InterPro" id="IPR036883">
    <property type="entry name" value="PDCD5-like_sf"/>
</dbReference>
<dbReference type="NCBIfam" id="NF003268">
    <property type="entry name" value="PRK04239.1"/>
    <property type="match status" value="1"/>
</dbReference>
<dbReference type="PANTHER" id="PTHR10840">
    <property type="entry name" value="PROGRAMMED CELL DEATH PROTEIN 5"/>
    <property type="match status" value="1"/>
</dbReference>
<dbReference type="PANTHER" id="PTHR10840:SF0">
    <property type="entry name" value="PROGRAMMED CELL DEATH PROTEIN 5"/>
    <property type="match status" value="1"/>
</dbReference>
<dbReference type="Pfam" id="PF01984">
    <property type="entry name" value="dsDNA_bind"/>
    <property type="match status" value="1"/>
</dbReference>
<dbReference type="PIRSF" id="PIRSF015730">
    <property type="entry name" value="TFAR19"/>
    <property type="match status" value="1"/>
</dbReference>
<dbReference type="SUPFAM" id="SSF46950">
    <property type="entry name" value="Double-stranded DNA-binding domain"/>
    <property type="match status" value="1"/>
</dbReference>
<name>Y1087_AERPE</name>
<organism>
    <name type="scientific">Aeropyrum pernix (strain ATCC 700893 / DSM 11879 / JCM 9820 / NBRC 100138 / K1)</name>
    <dbReference type="NCBI Taxonomy" id="272557"/>
    <lineage>
        <taxon>Archaea</taxon>
        <taxon>Thermoproteota</taxon>
        <taxon>Thermoprotei</taxon>
        <taxon>Desulfurococcales</taxon>
        <taxon>Desulfurococcaceae</taxon>
        <taxon>Aeropyrum</taxon>
    </lineage>
</organism>
<proteinExistence type="inferred from homology"/>
<evidence type="ECO:0000255" key="1">
    <source>
        <dbReference type="HAMAP-Rule" id="MF_00026"/>
    </source>
</evidence>
<reference key="1">
    <citation type="journal article" date="1999" name="DNA Res.">
        <title>Complete genome sequence of an aerobic hyper-thermophilic crenarchaeon, Aeropyrum pernix K1.</title>
        <authorList>
            <person name="Kawarabayasi Y."/>
            <person name="Hino Y."/>
            <person name="Horikawa H."/>
            <person name="Yamazaki S."/>
            <person name="Haikawa Y."/>
            <person name="Jin-no K."/>
            <person name="Takahashi M."/>
            <person name="Sekine M."/>
            <person name="Baba S."/>
            <person name="Ankai A."/>
            <person name="Kosugi H."/>
            <person name="Hosoyama A."/>
            <person name="Fukui S."/>
            <person name="Nagai Y."/>
            <person name="Nishijima K."/>
            <person name="Nakazawa H."/>
            <person name="Takamiya M."/>
            <person name="Masuda S."/>
            <person name="Funahashi T."/>
            <person name="Tanaka T."/>
            <person name="Kudoh Y."/>
            <person name="Yamazaki J."/>
            <person name="Kushida N."/>
            <person name="Oguchi A."/>
            <person name="Aoki K."/>
            <person name="Kubota K."/>
            <person name="Nakamura Y."/>
            <person name="Nomura N."/>
            <person name="Sako Y."/>
            <person name="Kikuchi H."/>
        </authorList>
    </citation>
    <scope>NUCLEOTIDE SEQUENCE [LARGE SCALE GENOMIC DNA]</scope>
    <source>
        <strain>ATCC 700893 / DSM 11879 / JCM 9820 / NBRC 100138 / K1</strain>
    </source>
</reference>
<protein>
    <recommendedName>
        <fullName evidence="1">DNA-binding protein APE_1087b</fullName>
    </recommendedName>
</protein>
<gene>
    <name type="ordered locus">APE_1087b</name>
</gene>
<feature type="chain" id="PRO_0000284558" description="DNA-binding protein APE_1087b">
    <location>
        <begin position="1"/>
        <end position="115"/>
    </location>
</feature>
<sequence>MSYEYDDELEEIRRRKMLELQRRLEEERRREEEQARLRAQKDAILRRLLTSKARERLANLRLVRPEIAEAAENAVIQLVQTGRITPPVDDDTLVQILLELDRSTRRDFEIRIKRK</sequence>
<keyword id="KW-0238">DNA-binding</keyword>
<keyword id="KW-1185">Reference proteome</keyword>